<name>SYP_VARPS</name>
<evidence type="ECO:0000255" key="1">
    <source>
        <dbReference type="HAMAP-Rule" id="MF_01569"/>
    </source>
</evidence>
<organism>
    <name type="scientific">Variovorax paradoxus (strain S110)</name>
    <dbReference type="NCBI Taxonomy" id="543728"/>
    <lineage>
        <taxon>Bacteria</taxon>
        <taxon>Pseudomonadati</taxon>
        <taxon>Pseudomonadota</taxon>
        <taxon>Betaproteobacteria</taxon>
        <taxon>Burkholderiales</taxon>
        <taxon>Comamonadaceae</taxon>
        <taxon>Variovorax</taxon>
    </lineage>
</organism>
<gene>
    <name evidence="1" type="primary">proS</name>
    <name type="ordered locus">Vapar_4212</name>
</gene>
<feature type="chain" id="PRO_1000215540" description="Proline--tRNA ligase">
    <location>
        <begin position="1"/>
        <end position="581"/>
    </location>
</feature>
<reference key="1">
    <citation type="journal article" date="2011" name="J. Bacteriol.">
        <title>Complete genome sequence of the metabolically versatile plant growth-promoting endophyte, Variovorax paradoxus S110.</title>
        <authorList>
            <person name="Han J.I."/>
            <person name="Choi H.K."/>
            <person name="Lee S.W."/>
            <person name="Orwin P.M."/>
            <person name="Kim J."/>
            <person name="Laroe S.L."/>
            <person name="Kim T.G."/>
            <person name="O'Neil J."/>
            <person name="Leadbetter J.R."/>
            <person name="Lee S.Y."/>
            <person name="Hur C.G."/>
            <person name="Spain J.C."/>
            <person name="Ovchinnikova G."/>
            <person name="Goodwin L."/>
            <person name="Han C."/>
        </authorList>
    </citation>
    <scope>NUCLEOTIDE SEQUENCE [LARGE SCALE GENOMIC DNA]</scope>
    <source>
        <strain>S110</strain>
    </source>
</reference>
<protein>
    <recommendedName>
        <fullName evidence="1">Proline--tRNA ligase</fullName>
        <ecNumber evidence="1">6.1.1.15</ecNumber>
    </recommendedName>
    <alternativeName>
        <fullName evidence="1">Prolyl-tRNA synthetase</fullName>
        <shortName evidence="1">ProRS</shortName>
    </alternativeName>
</protein>
<comment type="function">
    <text evidence="1">Catalyzes the attachment of proline to tRNA(Pro) in a two-step reaction: proline is first activated by ATP to form Pro-AMP and then transferred to the acceptor end of tRNA(Pro). As ProRS can inadvertently accommodate and process non-cognate amino acids such as alanine and cysteine, to avoid such errors it has two additional distinct editing activities against alanine. One activity is designated as 'pretransfer' editing and involves the tRNA(Pro)-independent hydrolysis of activated Ala-AMP. The other activity is designated 'posttransfer' editing and involves deacylation of mischarged Ala-tRNA(Pro). The misacylated Cys-tRNA(Pro) is not edited by ProRS.</text>
</comment>
<comment type="catalytic activity">
    <reaction evidence="1">
        <text>tRNA(Pro) + L-proline + ATP = L-prolyl-tRNA(Pro) + AMP + diphosphate</text>
        <dbReference type="Rhea" id="RHEA:14305"/>
        <dbReference type="Rhea" id="RHEA-COMP:9700"/>
        <dbReference type="Rhea" id="RHEA-COMP:9702"/>
        <dbReference type="ChEBI" id="CHEBI:30616"/>
        <dbReference type="ChEBI" id="CHEBI:33019"/>
        <dbReference type="ChEBI" id="CHEBI:60039"/>
        <dbReference type="ChEBI" id="CHEBI:78442"/>
        <dbReference type="ChEBI" id="CHEBI:78532"/>
        <dbReference type="ChEBI" id="CHEBI:456215"/>
        <dbReference type="EC" id="6.1.1.15"/>
    </reaction>
</comment>
<comment type="subunit">
    <text evidence="1">Homodimer.</text>
</comment>
<comment type="subcellular location">
    <subcellularLocation>
        <location evidence="1">Cytoplasm</location>
    </subcellularLocation>
</comment>
<comment type="domain">
    <text evidence="1">Consists of three domains: the N-terminal catalytic domain, the editing domain and the C-terminal anticodon-binding domain.</text>
</comment>
<comment type="similarity">
    <text evidence="1">Belongs to the class-II aminoacyl-tRNA synthetase family. ProS type 1 subfamily.</text>
</comment>
<accession>C5CXW9</accession>
<dbReference type="EC" id="6.1.1.15" evidence="1"/>
<dbReference type="EMBL" id="CP001635">
    <property type="protein sequence ID" value="ACS20825.1"/>
    <property type="molecule type" value="Genomic_DNA"/>
</dbReference>
<dbReference type="SMR" id="C5CXW9"/>
<dbReference type="STRING" id="543728.Vapar_4212"/>
<dbReference type="KEGG" id="vap:Vapar_4212"/>
<dbReference type="eggNOG" id="COG0442">
    <property type="taxonomic scope" value="Bacteria"/>
</dbReference>
<dbReference type="HOGENOM" id="CLU_016739_0_0_4"/>
<dbReference type="OrthoDB" id="9809052at2"/>
<dbReference type="GO" id="GO:0005829">
    <property type="term" value="C:cytosol"/>
    <property type="evidence" value="ECO:0007669"/>
    <property type="project" value="TreeGrafter"/>
</dbReference>
<dbReference type="GO" id="GO:0002161">
    <property type="term" value="F:aminoacyl-tRNA deacylase activity"/>
    <property type="evidence" value="ECO:0007669"/>
    <property type="project" value="InterPro"/>
</dbReference>
<dbReference type="GO" id="GO:0005524">
    <property type="term" value="F:ATP binding"/>
    <property type="evidence" value="ECO:0007669"/>
    <property type="project" value="UniProtKB-UniRule"/>
</dbReference>
<dbReference type="GO" id="GO:0004827">
    <property type="term" value="F:proline-tRNA ligase activity"/>
    <property type="evidence" value="ECO:0007669"/>
    <property type="project" value="UniProtKB-UniRule"/>
</dbReference>
<dbReference type="GO" id="GO:0006433">
    <property type="term" value="P:prolyl-tRNA aminoacylation"/>
    <property type="evidence" value="ECO:0007669"/>
    <property type="project" value="UniProtKB-UniRule"/>
</dbReference>
<dbReference type="CDD" id="cd04334">
    <property type="entry name" value="ProRS-INS"/>
    <property type="match status" value="1"/>
</dbReference>
<dbReference type="CDD" id="cd00861">
    <property type="entry name" value="ProRS_anticodon_short"/>
    <property type="match status" value="1"/>
</dbReference>
<dbReference type="CDD" id="cd00779">
    <property type="entry name" value="ProRS_core_prok"/>
    <property type="match status" value="1"/>
</dbReference>
<dbReference type="FunFam" id="3.30.930.10:FF:000042">
    <property type="entry name" value="probable proline--tRNA ligase, mitochondrial"/>
    <property type="match status" value="1"/>
</dbReference>
<dbReference type="Gene3D" id="3.40.50.800">
    <property type="entry name" value="Anticodon-binding domain"/>
    <property type="match status" value="1"/>
</dbReference>
<dbReference type="Gene3D" id="3.30.930.10">
    <property type="entry name" value="Bira Bifunctional Protein, Domain 2"/>
    <property type="match status" value="2"/>
</dbReference>
<dbReference type="Gene3D" id="3.90.960.10">
    <property type="entry name" value="YbaK/aminoacyl-tRNA synthetase-associated domain"/>
    <property type="match status" value="1"/>
</dbReference>
<dbReference type="HAMAP" id="MF_01569">
    <property type="entry name" value="Pro_tRNA_synth_type1"/>
    <property type="match status" value="1"/>
</dbReference>
<dbReference type="InterPro" id="IPR002314">
    <property type="entry name" value="aa-tRNA-synt_IIb"/>
</dbReference>
<dbReference type="InterPro" id="IPR006195">
    <property type="entry name" value="aa-tRNA-synth_II"/>
</dbReference>
<dbReference type="InterPro" id="IPR045864">
    <property type="entry name" value="aa-tRNA-synth_II/BPL/LPL"/>
</dbReference>
<dbReference type="InterPro" id="IPR004154">
    <property type="entry name" value="Anticodon-bd"/>
</dbReference>
<dbReference type="InterPro" id="IPR036621">
    <property type="entry name" value="Anticodon-bd_dom_sf"/>
</dbReference>
<dbReference type="InterPro" id="IPR002316">
    <property type="entry name" value="Pro-tRNA-ligase_IIa"/>
</dbReference>
<dbReference type="InterPro" id="IPR004500">
    <property type="entry name" value="Pro-tRNA-synth_IIa_bac-type"/>
</dbReference>
<dbReference type="InterPro" id="IPR023717">
    <property type="entry name" value="Pro-tRNA-Synthase_IIa_type1"/>
</dbReference>
<dbReference type="InterPro" id="IPR050062">
    <property type="entry name" value="Pro-tRNA_synthetase"/>
</dbReference>
<dbReference type="InterPro" id="IPR044140">
    <property type="entry name" value="ProRS_anticodon_short"/>
</dbReference>
<dbReference type="InterPro" id="IPR033730">
    <property type="entry name" value="ProRS_core_prok"/>
</dbReference>
<dbReference type="InterPro" id="IPR036754">
    <property type="entry name" value="YbaK/aa-tRNA-synt-asso_dom_sf"/>
</dbReference>
<dbReference type="InterPro" id="IPR007214">
    <property type="entry name" value="YbaK/aa-tRNA-synth-assoc-dom"/>
</dbReference>
<dbReference type="NCBIfam" id="NF006625">
    <property type="entry name" value="PRK09194.1"/>
    <property type="match status" value="1"/>
</dbReference>
<dbReference type="NCBIfam" id="TIGR00409">
    <property type="entry name" value="proS_fam_II"/>
    <property type="match status" value="1"/>
</dbReference>
<dbReference type="PANTHER" id="PTHR42753">
    <property type="entry name" value="MITOCHONDRIAL RIBOSOME PROTEIN L39/PROLYL-TRNA LIGASE FAMILY MEMBER"/>
    <property type="match status" value="1"/>
</dbReference>
<dbReference type="PANTHER" id="PTHR42753:SF2">
    <property type="entry name" value="PROLINE--TRNA LIGASE"/>
    <property type="match status" value="1"/>
</dbReference>
<dbReference type="Pfam" id="PF03129">
    <property type="entry name" value="HGTP_anticodon"/>
    <property type="match status" value="1"/>
</dbReference>
<dbReference type="Pfam" id="PF00587">
    <property type="entry name" value="tRNA-synt_2b"/>
    <property type="match status" value="1"/>
</dbReference>
<dbReference type="Pfam" id="PF04073">
    <property type="entry name" value="tRNA_edit"/>
    <property type="match status" value="1"/>
</dbReference>
<dbReference type="PIRSF" id="PIRSF001535">
    <property type="entry name" value="ProRS_1"/>
    <property type="match status" value="1"/>
</dbReference>
<dbReference type="PRINTS" id="PR01046">
    <property type="entry name" value="TRNASYNTHPRO"/>
</dbReference>
<dbReference type="SUPFAM" id="SSF52954">
    <property type="entry name" value="Class II aaRS ABD-related"/>
    <property type="match status" value="1"/>
</dbReference>
<dbReference type="SUPFAM" id="SSF55681">
    <property type="entry name" value="Class II aaRS and biotin synthetases"/>
    <property type="match status" value="1"/>
</dbReference>
<dbReference type="SUPFAM" id="SSF55826">
    <property type="entry name" value="YbaK/ProRS associated domain"/>
    <property type="match status" value="1"/>
</dbReference>
<dbReference type="PROSITE" id="PS50862">
    <property type="entry name" value="AA_TRNA_LIGASE_II"/>
    <property type="match status" value="1"/>
</dbReference>
<proteinExistence type="inferred from homology"/>
<sequence length="581" mass="63993">MKASRFFVSTLKEAPADAEVASHRLMMRAGMIKKLGTGIYTYMPMGLRVIRKVEAIVREEMNRAGAVELTMPVVQPAEFWQETGRFDKMGPELLRIKDRHDRDFVVQPTSEEVVTDIARQEIRSYKQLPKNFYQIQTKFRDERRPRFGLMRGREFIMKDAYSFDRDLDAAKASYQAMADAYRRIFDRFGLRYRAVAADSGAIGGDLSEEFQVIAATGEDAIVYCPGSDYAANMEKAEALAPAGPRPAAAKALEKTPTPGKSTCADVAELLGVPLSTTVKSLVLATDILDEAGNPKGSQVWLLLLRGDHDMNEIKVGKVPGLDKGFRFATLAEIDDHFGCKPGYLGPLNLKKPVRLVADREVMVMADWITGANEVDFHMTGVNWGRDLPEPELVADLRNVVAGDASPDGKGVLAIERGIEVGHVFVLGTKYSKDMNATYLDEAGKPQFLEMGCYGIGITRLPAAAIEQNHDERGIIWPDALAPFTVVVCPIGMDRSPEVKVAAEALYEQLLAAGVDVLLDDRGERPGAMFADWELIGVPHRVVISDRGLKEGQLEYQHRRDTAATKVPAAGIAEFIAGKFAQ</sequence>
<keyword id="KW-0030">Aminoacyl-tRNA synthetase</keyword>
<keyword id="KW-0067">ATP-binding</keyword>
<keyword id="KW-0963">Cytoplasm</keyword>
<keyword id="KW-0436">Ligase</keyword>
<keyword id="KW-0547">Nucleotide-binding</keyword>
<keyword id="KW-0648">Protein biosynthesis</keyword>